<comment type="function">
    <text evidence="1">Protein modifier that is covalently attached to lysine residues of substrate proteins, thereby targeting them for proteasomal degradation. The tagging system is termed pupylation.</text>
</comment>
<comment type="pathway">
    <text evidence="1">Protein degradation; proteasomal Pup-dependent pathway.</text>
</comment>
<comment type="subunit">
    <text evidence="1">Strongly interacts with the proteasome-associated ATPase ARC through a hydrophobic interface; the interacting region of Pup lies in its C-terminal half. There is one Pup binding site per ARC hexamer ring.</text>
</comment>
<comment type="domain">
    <text evidence="1">The N-terminal unstructured half of Pup provides a signal required to initiate unfolding and degradation by the proteasome but is not needed for pupylation, while the C-terminal helical half of Pup interacts with ARC to target proteins to the proteasome.</text>
</comment>
<comment type="PTM">
    <text evidence="1">Is modified by deamidation of its C-terminal glutamine to glutamate by the deamidase Dop, a prerequisite to the subsequent pupylation process.</text>
</comment>
<comment type="similarity">
    <text evidence="1">Belongs to the prokaryotic ubiquitin-like protein family.</text>
</comment>
<sequence>MSQEKVQRHGGGDGEEESGPEAAGQERREKLGEDVDAILDEIDDVLEENAEDFVRAYVQKGGQ</sequence>
<gene>
    <name evidence="1" type="primary">pup1</name>
    <name type="ordered locus">SACE_2250</name>
</gene>
<keyword id="KW-0175">Coiled coil</keyword>
<keyword id="KW-1017">Isopeptide bond</keyword>
<keyword id="KW-1185">Reference proteome</keyword>
<keyword id="KW-0833">Ubl conjugation pathway</keyword>
<protein>
    <recommendedName>
        <fullName evidence="1">Prokaryotic ubiquitin-like protein Pup 1</fullName>
    </recommendedName>
    <alternativeName>
        <fullName evidence="1">Bacterial ubiquitin-like modifier 1</fullName>
    </alternativeName>
</protein>
<organism>
    <name type="scientific">Saccharopolyspora erythraea (strain ATCC 11635 / DSM 40517 / JCM 4748 / NBRC 13426 / NCIMB 8594 / NRRL 2338)</name>
    <dbReference type="NCBI Taxonomy" id="405948"/>
    <lineage>
        <taxon>Bacteria</taxon>
        <taxon>Bacillati</taxon>
        <taxon>Actinomycetota</taxon>
        <taxon>Actinomycetes</taxon>
        <taxon>Pseudonocardiales</taxon>
        <taxon>Pseudonocardiaceae</taxon>
        <taxon>Saccharopolyspora</taxon>
    </lineage>
</organism>
<dbReference type="EMBL" id="AM420293">
    <property type="protein sequence ID" value="CAM01555.1"/>
    <property type="molecule type" value="Genomic_DNA"/>
</dbReference>
<dbReference type="RefSeq" id="WP_009945868.1">
    <property type="nucleotide sequence ID" value="NC_009142.1"/>
</dbReference>
<dbReference type="SMR" id="A4FBY0"/>
<dbReference type="STRING" id="405948.SACE_2250"/>
<dbReference type="KEGG" id="sen:SACE_2250"/>
<dbReference type="eggNOG" id="ENOG50333JS">
    <property type="taxonomic scope" value="Bacteria"/>
</dbReference>
<dbReference type="HOGENOM" id="CLU_183816_1_0_11"/>
<dbReference type="OrthoDB" id="3254977at2"/>
<dbReference type="UniPathway" id="UPA00997"/>
<dbReference type="Proteomes" id="UP000006728">
    <property type="component" value="Chromosome"/>
</dbReference>
<dbReference type="GO" id="GO:0070628">
    <property type="term" value="F:proteasome binding"/>
    <property type="evidence" value="ECO:0007669"/>
    <property type="project" value="UniProtKB-UniRule"/>
</dbReference>
<dbReference type="GO" id="GO:0031386">
    <property type="term" value="F:protein tag activity"/>
    <property type="evidence" value="ECO:0007669"/>
    <property type="project" value="UniProtKB-UniRule"/>
</dbReference>
<dbReference type="GO" id="GO:0019941">
    <property type="term" value="P:modification-dependent protein catabolic process"/>
    <property type="evidence" value="ECO:0007669"/>
    <property type="project" value="UniProtKB-UniRule"/>
</dbReference>
<dbReference type="GO" id="GO:0010498">
    <property type="term" value="P:proteasomal protein catabolic process"/>
    <property type="evidence" value="ECO:0007669"/>
    <property type="project" value="UniProtKB-UniRule"/>
</dbReference>
<dbReference type="GO" id="GO:0070490">
    <property type="term" value="P:protein pupylation"/>
    <property type="evidence" value="ECO:0007669"/>
    <property type="project" value="UniProtKB-UniRule"/>
</dbReference>
<dbReference type="HAMAP" id="MF_02106">
    <property type="entry name" value="Pup"/>
    <property type="match status" value="1"/>
</dbReference>
<dbReference type="InterPro" id="IPR008515">
    <property type="entry name" value="Ubiquitin-like_Pup"/>
</dbReference>
<dbReference type="NCBIfam" id="TIGR03687">
    <property type="entry name" value="pupylate_cterm"/>
    <property type="match status" value="1"/>
</dbReference>
<dbReference type="Pfam" id="PF05639">
    <property type="entry name" value="Pup"/>
    <property type="match status" value="1"/>
</dbReference>
<accession>A4FBY0</accession>
<name>PUP1_SACEN</name>
<feature type="chain" id="PRO_0000390609" description="Prokaryotic ubiquitin-like protein Pup 1">
    <location>
        <begin position="1"/>
        <end position="63"/>
    </location>
</feature>
<feature type="region of interest" description="Disordered" evidence="2">
    <location>
        <begin position="1"/>
        <end position="35"/>
    </location>
</feature>
<feature type="region of interest" description="ARC ATPase binding" evidence="1">
    <location>
        <begin position="20"/>
        <end position="57"/>
    </location>
</feature>
<feature type="coiled-coil region" evidence="1">
    <location>
        <begin position="25"/>
        <end position="51"/>
    </location>
</feature>
<feature type="compositionally biased region" description="Basic and acidic residues" evidence="2">
    <location>
        <begin position="1"/>
        <end position="12"/>
    </location>
</feature>
<feature type="compositionally biased region" description="Basic and acidic residues" evidence="2">
    <location>
        <begin position="24"/>
        <end position="33"/>
    </location>
</feature>
<feature type="modified residue" description="Deamidated glutamine" evidence="1">
    <location>
        <position position="63"/>
    </location>
</feature>
<feature type="cross-link" description="Isoglutamyl lysine isopeptide (Gln-Lys) (interchain with K-? in acceptor proteins)" evidence="1">
    <location>
        <position position="63"/>
    </location>
</feature>
<evidence type="ECO:0000255" key="1">
    <source>
        <dbReference type="HAMAP-Rule" id="MF_02106"/>
    </source>
</evidence>
<evidence type="ECO:0000256" key="2">
    <source>
        <dbReference type="SAM" id="MobiDB-lite"/>
    </source>
</evidence>
<reference key="1">
    <citation type="journal article" date="2007" name="Nat. Biotechnol.">
        <title>Complete genome sequence of the erythromycin-producing bacterium Saccharopolyspora erythraea NRRL23338.</title>
        <authorList>
            <person name="Oliynyk M."/>
            <person name="Samborskyy M."/>
            <person name="Lester J.B."/>
            <person name="Mironenko T."/>
            <person name="Scott N."/>
            <person name="Dickens S."/>
            <person name="Haydock S.F."/>
            <person name="Leadlay P.F."/>
        </authorList>
    </citation>
    <scope>NUCLEOTIDE SEQUENCE [LARGE SCALE GENOMIC DNA]</scope>
    <source>
        <strain>ATCC 11635 / DSM 40517 / JCM 4748 / NBRC 13426 / NCIMB 8594 / NRRL 2338</strain>
    </source>
</reference>
<proteinExistence type="inferred from homology"/>